<protein>
    <recommendedName>
        <fullName evidence="1">Large ribosomal subunit protein uL14</fullName>
    </recommendedName>
    <alternativeName>
        <fullName evidence="2">50S ribosomal protein L14</fullName>
    </alternativeName>
</protein>
<gene>
    <name evidence="1" type="primary">rplN</name>
    <name type="ordered locus">BMA2622</name>
</gene>
<evidence type="ECO:0000255" key="1">
    <source>
        <dbReference type="HAMAP-Rule" id="MF_01367"/>
    </source>
</evidence>
<evidence type="ECO:0000305" key="2"/>
<proteinExistence type="inferred from homology"/>
<feature type="chain" id="PRO_0000266461" description="Large ribosomal subunit protein uL14">
    <location>
        <begin position="1"/>
        <end position="122"/>
    </location>
</feature>
<keyword id="KW-1185">Reference proteome</keyword>
<keyword id="KW-0687">Ribonucleoprotein</keyword>
<keyword id="KW-0689">Ribosomal protein</keyword>
<keyword id="KW-0694">RNA-binding</keyword>
<keyword id="KW-0699">rRNA-binding</keyword>
<name>RL14_BURMA</name>
<reference key="1">
    <citation type="journal article" date="2004" name="Proc. Natl. Acad. Sci. U.S.A.">
        <title>Structural flexibility in the Burkholderia mallei genome.</title>
        <authorList>
            <person name="Nierman W.C."/>
            <person name="DeShazer D."/>
            <person name="Kim H.S."/>
            <person name="Tettelin H."/>
            <person name="Nelson K.E."/>
            <person name="Feldblyum T.V."/>
            <person name="Ulrich R.L."/>
            <person name="Ronning C.M."/>
            <person name="Brinkac L.M."/>
            <person name="Daugherty S.C."/>
            <person name="Davidsen T.D."/>
            <person name="DeBoy R.T."/>
            <person name="Dimitrov G."/>
            <person name="Dodson R.J."/>
            <person name="Durkin A.S."/>
            <person name="Gwinn M.L."/>
            <person name="Haft D.H."/>
            <person name="Khouri H.M."/>
            <person name="Kolonay J.F."/>
            <person name="Madupu R."/>
            <person name="Mohammoud Y."/>
            <person name="Nelson W.C."/>
            <person name="Radune D."/>
            <person name="Romero C.M."/>
            <person name="Sarria S."/>
            <person name="Selengut J."/>
            <person name="Shamblin C."/>
            <person name="Sullivan S.A."/>
            <person name="White O."/>
            <person name="Yu Y."/>
            <person name="Zafar N."/>
            <person name="Zhou L."/>
            <person name="Fraser C.M."/>
        </authorList>
    </citation>
    <scope>NUCLEOTIDE SEQUENCE [LARGE SCALE GENOMIC DNA]</scope>
    <source>
        <strain>ATCC 23344</strain>
    </source>
</reference>
<accession>Q62GL5</accession>
<comment type="function">
    <text evidence="1">Binds to 23S rRNA. Forms part of two intersubunit bridges in the 70S ribosome.</text>
</comment>
<comment type="subunit">
    <text evidence="1">Part of the 50S ribosomal subunit. Forms a cluster with proteins L3 and L19. In the 70S ribosome, L14 and L19 interact and together make contacts with the 16S rRNA in bridges B5 and B8.</text>
</comment>
<comment type="similarity">
    <text evidence="1">Belongs to the universal ribosomal protein uL14 family.</text>
</comment>
<sequence>MIQTESRLEVADNTGAREVMCIKVLGGSKRRYASIGDIIKVSVKEATPRGRVKKGEIYNAVVVRTAKGVRRQDGSLIKFDGNAAVLLNNKLEPIGTRIFGPVTRELRSERFMKIVSLAPEVL</sequence>
<dbReference type="EMBL" id="CP000010">
    <property type="protein sequence ID" value="AAU47860.1"/>
    <property type="molecule type" value="Genomic_DNA"/>
</dbReference>
<dbReference type="RefSeq" id="WP_004197951.1">
    <property type="nucleotide sequence ID" value="NC_006348.1"/>
</dbReference>
<dbReference type="RefSeq" id="YP_104156.1">
    <property type="nucleotide sequence ID" value="NC_006348.1"/>
</dbReference>
<dbReference type="SMR" id="Q62GL5"/>
<dbReference type="GeneID" id="93171007"/>
<dbReference type="KEGG" id="bma:BMA2622"/>
<dbReference type="PATRIC" id="fig|243160.12.peg.2693"/>
<dbReference type="eggNOG" id="COG0093">
    <property type="taxonomic scope" value="Bacteria"/>
</dbReference>
<dbReference type="HOGENOM" id="CLU_095071_2_1_4"/>
<dbReference type="PRO" id="PR:Q62GL5"/>
<dbReference type="Proteomes" id="UP000006693">
    <property type="component" value="Chromosome 1"/>
</dbReference>
<dbReference type="GO" id="GO:0022625">
    <property type="term" value="C:cytosolic large ribosomal subunit"/>
    <property type="evidence" value="ECO:0007669"/>
    <property type="project" value="TreeGrafter"/>
</dbReference>
<dbReference type="GO" id="GO:0070180">
    <property type="term" value="F:large ribosomal subunit rRNA binding"/>
    <property type="evidence" value="ECO:0007669"/>
    <property type="project" value="TreeGrafter"/>
</dbReference>
<dbReference type="GO" id="GO:0003735">
    <property type="term" value="F:structural constituent of ribosome"/>
    <property type="evidence" value="ECO:0007669"/>
    <property type="project" value="InterPro"/>
</dbReference>
<dbReference type="GO" id="GO:0006412">
    <property type="term" value="P:translation"/>
    <property type="evidence" value="ECO:0007669"/>
    <property type="project" value="UniProtKB-UniRule"/>
</dbReference>
<dbReference type="CDD" id="cd00337">
    <property type="entry name" value="Ribosomal_uL14"/>
    <property type="match status" value="1"/>
</dbReference>
<dbReference type="FunFam" id="2.40.150.20:FF:000001">
    <property type="entry name" value="50S ribosomal protein L14"/>
    <property type="match status" value="1"/>
</dbReference>
<dbReference type="Gene3D" id="2.40.150.20">
    <property type="entry name" value="Ribosomal protein L14"/>
    <property type="match status" value="1"/>
</dbReference>
<dbReference type="HAMAP" id="MF_01367">
    <property type="entry name" value="Ribosomal_uL14"/>
    <property type="match status" value="1"/>
</dbReference>
<dbReference type="InterPro" id="IPR000218">
    <property type="entry name" value="Ribosomal_uL14"/>
</dbReference>
<dbReference type="InterPro" id="IPR005745">
    <property type="entry name" value="Ribosomal_uL14_bac-type"/>
</dbReference>
<dbReference type="InterPro" id="IPR019972">
    <property type="entry name" value="Ribosomal_uL14_CS"/>
</dbReference>
<dbReference type="InterPro" id="IPR036853">
    <property type="entry name" value="Ribosomal_uL14_sf"/>
</dbReference>
<dbReference type="NCBIfam" id="TIGR01067">
    <property type="entry name" value="rplN_bact"/>
    <property type="match status" value="1"/>
</dbReference>
<dbReference type="PANTHER" id="PTHR11761">
    <property type="entry name" value="50S/60S RIBOSOMAL PROTEIN L14/L23"/>
    <property type="match status" value="1"/>
</dbReference>
<dbReference type="PANTHER" id="PTHR11761:SF3">
    <property type="entry name" value="LARGE RIBOSOMAL SUBUNIT PROTEIN UL14M"/>
    <property type="match status" value="1"/>
</dbReference>
<dbReference type="Pfam" id="PF00238">
    <property type="entry name" value="Ribosomal_L14"/>
    <property type="match status" value="1"/>
</dbReference>
<dbReference type="SMART" id="SM01374">
    <property type="entry name" value="Ribosomal_L14"/>
    <property type="match status" value="1"/>
</dbReference>
<dbReference type="SUPFAM" id="SSF50193">
    <property type="entry name" value="Ribosomal protein L14"/>
    <property type="match status" value="1"/>
</dbReference>
<dbReference type="PROSITE" id="PS00049">
    <property type="entry name" value="RIBOSOMAL_L14"/>
    <property type="match status" value="1"/>
</dbReference>
<organism>
    <name type="scientific">Burkholderia mallei (strain ATCC 23344)</name>
    <dbReference type="NCBI Taxonomy" id="243160"/>
    <lineage>
        <taxon>Bacteria</taxon>
        <taxon>Pseudomonadati</taxon>
        <taxon>Pseudomonadota</taxon>
        <taxon>Betaproteobacteria</taxon>
        <taxon>Burkholderiales</taxon>
        <taxon>Burkholderiaceae</taxon>
        <taxon>Burkholderia</taxon>
        <taxon>pseudomallei group</taxon>
    </lineage>
</organism>